<evidence type="ECO:0000250" key="1"/>
<evidence type="ECO:0000255" key="2">
    <source>
        <dbReference type="PROSITE-ProRule" id="PRU01210"/>
    </source>
</evidence>
<evidence type="ECO:0000305" key="3"/>
<proteinExistence type="evidence at transcript level"/>
<protein>
    <recommendedName>
        <fullName>Neurotoxin BmKAEP2</fullName>
        <shortName>AEP2</shortName>
    </recommendedName>
</protein>
<feature type="signal peptide" evidence="1">
    <location>
        <begin position="1"/>
        <end position="21"/>
    </location>
</feature>
<feature type="chain" id="PRO_0000035213" description="Neurotoxin BmKAEP2">
    <location>
        <begin position="22"/>
        <end position="82"/>
    </location>
</feature>
<feature type="domain" description="LCN-type CS-alpha/beta" evidence="2">
    <location>
        <begin position="22"/>
        <end position="82"/>
    </location>
</feature>
<feature type="disulfide bond" evidence="2">
    <location>
        <begin position="31"/>
        <end position="81"/>
    </location>
</feature>
<feature type="disulfide bond" evidence="2">
    <location>
        <begin position="35"/>
        <end position="56"/>
    </location>
</feature>
<feature type="disulfide bond" evidence="2">
    <location>
        <begin position="42"/>
        <end position="63"/>
    </location>
</feature>
<feature type="disulfide bond" evidence="2">
    <location>
        <begin position="46"/>
        <end position="65"/>
    </location>
</feature>
<organism>
    <name type="scientific">Olivierus martensii</name>
    <name type="common">Manchurian scorpion</name>
    <name type="synonym">Mesobuthus martensii</name>
    <dbReference type="NCBI Taxonomy" id="34649"/>
    <lineage>
        <taxon>Eukaryota</taxon>
        <taxon>Metazoa</taxon>
        <taxon>Ecdysozoa</taxon>
        <taxon>Arthropoda</taxon>
        <taxon>Chelicerata</taxon>
        <taxon>Arachnida</taxon>
        <taxon>Scorpiones</taxon>
        <taxon>Buthida</taxon>
        <taxon>Buthoidea</taxon>
        <taxon>Buthidae</taxon>
        <taxon>Olivierus</taxon>
    </lineage>
</organism>
<reference key="1">
    <citation type="submission" date="1998-04" db="EMBL/GenBank/DDBJ databases">
        <authorList>
            <person name="Ling M.-H."/>
            <person name="Wang C.-G."/>
            <person name="Wang D.-C."/>
            <person name="Chi C.-W."/>
        </authorList>
    </citation>
    <scope>NUCLEOTIDE SEQUENCE [MRNA]</scope>
    <source>
        <tissue>Venom</tissue>
    </source>
</reference>
<name>AEP2_OLIMR</name>
<sequence length="85" mass="9331">MKLFLLLVISASMLIDGLVNADGYIRGSNGCKVSCLWGNEGCNKECKAFGAYYGYCWTWGLACWCEGLPDDKTWKSESNTCGGKK</sequence>
<keyword id="KW-1015">Disulfide bond</keyword>
<keyword id="KW-0872">Ion channel impairing toxin</keyword>
<keyword id="KW-0528">Neurotoxin</keyword>
<keyword id="KW-0964">Secreted</keyword>
<keyword id="KW-0732">Signal</keyword>
<keyword id="KW-0800">Toxin</keyword>
<keyword id="KW-0738">Voltage-gated sodium channel impairing toxin</keyword>
<accession>Q86M31</accession>
<dbReference type="EMBL" id="AF062564">
    <property type="protein sequence ID" value="AAC16698.1"/>
    <property type="molecule type" value="mRNA"/>
</dbReference>
<dbReference type="SMR" id="Q86M31"/>
<dbReference type="GO" id="GO:0005576">
    <property type="term" value="C:extracellular region"/>
    <property type="evidence" value="ECO:0007669"/>
    <property type="project" value="UniProtKB-SubCell"/>
</dbReference>
<dbReference type="GO" id="GO:0019871">
    <property type="term" value="F:sodium channel inhibitor activity"/>
    <property type="evidence" value="ECO:0007669"/>
    <property type="project" value="InterPro"/>
</dbReference>
<dbReference type="GO" id="GO:0090729">
    <property type="term" value="F:toxin activity"/>
    <property type="evidence" value="ECO:0007669"/>
    <property type="project" value="UniProtKB-KW"/>
</dbReference>
<dbReference type="GO" id="GO:0006952">
    <property type="term" value="P:defense response"/>
    <property type="evidence" value="ECO:0007669"/>
    <property type="project" value="InterPro"/>
</dbReference>
<dbReference type="CDD" id="cd23106">
    <property type="entry name" value="neurotoxins_LC_scorpion"/>
    <property type="match status" value="1"/>
</dbReference>
<dbReference type="FunFam" id="3.30.30.10:FF:000002">
    <property type="entry name" value="Alpha-like toxin BmK-M1"/>
    <property type="match status" value="1"/>
</dbReference>
<dbReference type="Gene3D" id="3.30.30.10">
    <property type="entry name" value="Knottin, scorpion toxin-like"/>
    <property type="match status" value="1"/>
</dbReference>
<dbReference type="InterPro" id="IPR044062">
    <property type="entry name" value="LCN-type_CS_alpha_beta_dom"/>
</dbReference>
<dbReference type="InterPro" id="IPR003614">
    <property type="entry name" value="Scorpion_toxin-like"/>
</dbReference>
<dbReference type="InterPro" id="IPR036574">
    <property type="entry name" value="Scorpion_toxin-like_sf"/>
</dbReference>
<dbReference type="InterPro" id="IPR018218">
    <property type="entry name" value="Scorpion_toxinL"/>
</dbReference>
<dbReference type="InterPro" id="IPR002061">
    <property type="entry name" value="Scorpion_toxinL/defensin"/>
</dbReference>
<dbReference type="Pfam" id="PF00537">
    <property type="entry name" value="Toxin_3"/>
    <property type="match status" value="1"/>
</dbReference>
<dbReference type="PRINTS" id="PR00285">
    <property type="entry name" value="SCORPNTOXIN"/>
</dbReference>
<dbReference type="SMART" id="SM00505">
    <property type="entry name" value="Knot1"/>
    <property type="match status" value="1"/>
</dbReference>
<dbReference type="SUPFAM" id="SSF57095">
    <property type="entry name" value="Scorpion toxin-like"/>
    <property type="match status" value="1"/>
</dbReference>
<dbReference type="PROSITE" id="PS51863">
    <property type="entry name" value="LCN_CSAB"/>
    <property type="match status" value="1"/>
</dbReference>
<comment type="function">
    <text evidence="1">Depressant insect beta-toxins cause a transient contraction paralysis followed by a slow flaccid paralysis. They bind voltage-independently at site-4 of sodium channels (Nav) and shift the voltage of activation toward more negative potentials thereby affecting sodium channel activation and promoting spontaneous and repetitive firing. This toxin is active only on insects. Has potential anti-epilepsy effect (By similarity).</text>
</comment>
<comment type="subcellular location">
    <subcellularLocation>
        <location>Secreted</location>
    </subcellularLocation>
</comment>
<comment type="tissue specificity">
    <text>Expressed by the venom gland.</text>
</comment>
<comment type="domain">
    <text evidence="3">Has the structural arrangement of an alpha-helix connected to antiparallel beta-sheets by disulfide bonds (CS-alpha/beta).</text>
</comment>
<comment type="similarity">
    <text evidence="3">Belongs to the long (4 C-C) scorpion toxin superfamily. Sodium channel inhibitor family. Beta subfamily.</text>
</comment>